<name>PLSX_LIMRD</name>
<comment type="function">
    <text evidence="1">Catalyzes the reversible formation of acyl-phosphate (acyl-PO(4)) from acyl-[acyl-carrier-protein] (acyl-ACP). This enzyme utilizes acyl-ACP as fatty acyl donor, but not acyl-CoA.</text>
</comment>
<comment type="catalytic activity">
    <reaction evidence="1">
        <text>a fatty acyl-[ACP] + phosphate = an acyl phosphate + holo-[ACP]</text>
        <dbReference type="Rhea" id="RHEA:42292"/>
        <dbReference type="Rhea" id="RHEA-COMP:9685"/>
        <dbReference type="Rhea" id="RHEA-COMP:14125"/>
        <dbReference type="ChEBI" id="CHEBI:43474"/>
        <dbReference type="ChEBI" id="CHEBI:59918"/>
        <dbReference type="ChEBI" id="CHEBI:64479"/>
        <dbReference type="ChEBI" id="CHEBI:138651"/>
        <dbReference type="EC" id="2.3.1.274"/>
    </reaction>
</comment>
<comment type="pathway">
    <text evidence="1">Lipid metabolism; phospholipid metabolism.</text>
</comment>
<comment type="subunit">
    <text evidence="1">Homodimer. Probably interacts with PlsY.</text>
</comment>
<comment type="subcellular location">
    <subcellularLocation>
        <location evidence="1">Cytoplasm</location>
    </subcellularLocation>
    <text evidence="1">Associated with the membrane possibly through PlsY.</text>
</comment>
<comment type="similarity">
    <text evidence="1">Belongs to the PlsX family.</text>
</comment>
<feature type="chain" id="PRO_0000329236" description="Phosphate acyltransferase">
    <location>
        <begin position="1"/>
        <end position="343"/>
    </location>
</feature>
<keyword id="KW-0963">Cytoplasm</keyword>
<keyword id="KW-0444">Lipid biosynthesis</keyword>
<keyword id="KW-0443">Lipid metabolism</keyword>
<keyword id="KW-0594">Phospholipid biosynthesis</keyword>
<keyword id="KW-1208">Phospholipid metabolism</keyword>
<keyword id="KW-1185">Reference proteome</keyword>
<keyword id="KW-0808">Transferase</keyword>
<accession>A5VKP4</accession>
<sequence length="343" mass="36975">MKIAVDAMGGDNAPQVIIEGVEEARDLYPDLEFDLYGNPDKVKPLIKNNERLNIVATSEEISMGEEPVRAIRRKKDSSIVRAATAVKEGKADAFFSAGNTGAILAAGLFIVGRIKGIDRPGLTSILPIAKPGASRHNFVYLDTGANAESKEKNLEQYAYLGKFYAENVLGVANPRIALLNNGAEEDKGDKLHKEVWQILNSKDDLNFVGNIESGDLLFGKADVVVSDGWTANAALKATEGTAKMMMTLIKDGILHGGLRAKLGYLMLKPVFHQIGQKMSASTYGGAVLLGLKAPVVKTHGSADALAVKNTISQIRTMLKTGVIEKTVEFFDSTENLDNSQKNE</sequence>
<evidence type="ECO:0000255" key="1">
    <source>
        <dbReference type="HAMAP-Rule" id="MF_00019"/>
    </source>
</evidence>
<gene>
    <name evidence="1" type="primary">plsX</name>
    <name type="ordered locus">Lreu_1161</name>
</gene>
<reference key="1">
    <citation type="journal article" date="2011" name="PLoS Genet.">
        <title>The evolution of host specialization in the vertebrate gut symbiont Lactobacillus reuteri.</title>
        <authorList>
            <person name="Frese S.A."/>
            <person name="Benson A.K."/>
            <person name="Tannock G.W."/>
            <person name="Loach D.M."/>
            <person name="Kim J."/>
            <person name="Zhang M."/>
            <person name="Oh P.L."/>
            <person name="Heng N.C."/>
            <person name="Patil P.B."/>
            <person name="Juge N."/>
            <person name="Mackenzie D.A."/>
            <person name="Pearson B.M."/>
            <person name="Lapidus A."/>
            <person name="Dalin E."/>
            <person name="Tice H."/>
            <person name="Goltsman E."/>
            <person name="Land M."/>
            <person name="Hauser L."/>
            <person name="Ivanova N."/>
            <person name="Kyrpides N.C."/>
            <person name="Walter J."/>
        </authorList>
    </citation>
    <scope>NUCLEOTIDE SEQUENCE [LARGE SCALE GENOMIC DNA]</scope>
    <source>
        <strain>DSM 20016</strain>
    </source>
</reference>
<dbReference type="EC" id="2.3.1.274" evidence="1"/>
<dbReference type="EMBL" id="CP000705">
    <property type="protein sequence ID" value="ABQ83418.1"/>
    <property type="molecule type" value="Genomic_DNA"/>
</dbReference>
<dbReference type="RefSeq" id="WP_003668375.1">
    <property type="nucleotide sequence ID" value="NC_009513.1"/>
</dbReference>
<dbReference type="SMR" id="A5VKP4"/>
<dbReference type="STRING" id="557436.Lreu_1161"/>
<dbReference type="KEGG" id="lre:Lreu_1161"/>
<dbReference type="PATRIC" id="fig|557436.17.peg.27"/>
<dbReference type="eggNOG" id="COG0416">
    <property type="taxonomic scope" value="Bacteria"/>
</dbReference>
<dbReference type="HOGENOM" id="CLU_039379_1_1_9"/>
<dbReference type="UniPathway" id="UPA00085"/>
<dbReference type="Proteomes" id="UP000001991">
    <property type="component" value="Chromosome"/>
</dbReference>
<dbReference type="GO" id="GO:0005737">
    <property type="term" value="C:cytoplasm"/>
    <property type="evidence" value="ECO:0007669"/>
    <property type="project" value="UniProtKB-SubCell"/>
</dbReference>
<dbReference type="GO" id="GO:0043811">
    <property type="term" value="F:phosphate:acyl-[acyl carrier protein] acyltransferase activity"/>
    <property type="evidence" value="ECO:0007669"/>
    <property type="project" value="UniProtKB-UniRule"/>
</dbReference>
<dbReference type="GO" id="GO:0006633">
    <property type="term" value="P:fatty acid biosynthetic process"/>
    <property type="evidence" value="ECO:0007669"/>
    <property type="project" value="UniProtKB-UniRule"/>
</dbReference>
<dbReference type="GO" id="GO:0008654">
    <property type="term" value="P:phospholipid biosynthetic process"/>
    <property type="evidence" value="ECO:0007669"/>
    <property type="project" value="UniProtKB-KW"/>
</dbReference>
<dbReference type="Gene3D" id="3.40.718.10">
    <property type="entry name" value="Isopropylmalate Dehydrogenase"/>
    <property type="match status" value="1"/>
</dbReference>
<dbReference type="HAMAP" id="MF_00019">
    <property type="entry name" value="PlsX"/>
    <property type="match status" value="1"/>
</dbReference>
<dbReference type="InterPro" id="IPR003664">
    <property type="entry name" value="FA_synthesis"/>
</dbReference>
<dbReference type="InterPro" id="IPR012281">
    <property type="entry name" value="Phospholipid_synth_PlsX-like"/>
</dbReference>
<dbReference type="NCBIfam" id="TIGR00182">
    <property type="entry name" value="plsX"/>
    <property type="match status" value="1"/>
</dbReference>
<dbReference type="PANTHER" id="PTHR30100">
    <property type="entry name" value="FATTY ACID/PHOSPHOLIPID SYNTHESIS PROTEIN PLSX"/>
    <property type="match status" value="1"/>
</dbReference>
<dbReference type="PANTHER" id="PTHR30100:SF1">
    <property type="entry name" value="PHOSPHATE ACYLTRANSFERASE"/>
    <property type="match status" value="1"/>
</dbReference>
<dbReference type="Pfam" id="PF02504">
    <property type="entry name" value="FA_synthesis"/>
    <property type="match status" value="1"/>
</dbReference>
<dbReference type="PIRSF" id="PIRSF002465">
    <property type="entry name" value="Phsphlp_syn_PlsX"/>
    <property type="match status" value="1"/>
</dbReference>
<dbReference type="SUPFAM" id="SSF53659">
    <property type="entry name" value="Isocitrate/Isopropylmalate dehydrogenase-like"/>
    <property type="match status" value="1"/>
</dbReference>
<organism>
    <name type="scientific">Limosilactobacillus reuteri (strain DSM 20016)</name>
    <name type="common">Lactobacillus reuteri</name>
    <dbReference type="NCBI Taxonomy" id="557436"/>
    <lineage>
        <taxon>Bacteria</taxon>
        <taxon>Bacillati</taxon>
        <taxon>Bacillota</taxon>
        <taxon>Bacilli</taxon>
        <taxon>Lactobacillales</taxon>
        <taxon>Lactobacillaceae</taxon>
        <taxon>Limosilactobacillus</taxon>
    </lineage>
</organism>
<protein>
    <recommendedName>
        <fullName evidence="1">Phosphate acyltransferase</fullName>
        <ecNumber evidence="1">2.3.1.274</ecNumber>
    </recommendedName>
    <alternativeName>
        <fullName evidence="1">Acyl-ACP phosphotransacylase</fullName>
    </alternativeName>
    <alternativeName>
        <fullName evidence="1">Acyl-[acyl-carrier-protein]--phosphate acyltransferase</fullName>
    </alternativeName>
    <alternativeName>
        <fullName evidence="1">Phosphate-acyl-ACP acyltransferase</fullName>
    </alternativeName>
</protein>
<proteinExistence type="inferred from homology"/>